<sequence length="151" mass="16309">MFDVSFTELMVIGVIALVVIGPERLPKVARTIGHLLGRAQRYVNDVKSDIRREIELDELRKFKDEMDETARSMQTSLRETEDTLRDSTQALRAELDDTARDASKAVNGADAPAEPAPAVASDTDTDTDTRSIAPPAAATPADKTPPTGSAT</sequence>
<evidence type="ECO:0000255" key="1">
    <source>
        <dbReference type="HAMAP-Rule" id="MF_00237"/>
    </source>
</evidence>
<evidence type="ECO:0000256" key="2">
    <source>
        <dbReference type="SAM" id="MobiDB-lite"/>
    </source>
</evidence>
<comment type="function">
    <text evidence="1">Part of the twin-arginine translocation (Tat) system that transports large folded proteins containing a characteristic twin-arginine motif in their signal peptide across membranes. Together with TatC, TatB is part of a receptor directly interacting with Tat signal peptides. TatB may form an oligomeric binding site that transiently accommodates folded Tat precursor proteins before their translocation.</text>
</comment>
<comment type="subunit">
    <text evidence="1">The Tat system comprises two distinct complexes: a TatABC complex, containing multiple copies of TatA, TatB and TatC subunits, and a separate TatA complex, containing only TatA subunits. Substrates initially bind to the TatABC complex, which probably triggers association of the separate TatA complex to form the active translocon.</text>
</comment>
<comment type="subcellular location">
    <subcellularLocation>
        <location evidence="1">Cell inner membrane</location>
        <topology evidence="1">Single-pass membrane protein</topology>
    </subcellularLocation>
</comment>
<comment type="similarity">
    <text evidence="1">Belongs to the TatB family.</text>
</comment>
<organism>
    <name type="scientific">Bordetella parapertussis (strain 12822 / ATCC BAA-587 / NCTC 13253)</name>
    <dbReference type="NCBI Taxonomy" id="257311"/>
    <lineage>
        <taxon>Bacteria</taxon>
        <taxon>Pseudomonadati</taxon>
        <taxon>Pseudomonadota</taxon>
        <taxon>Betaproteobacteria</taxon>
        <taxon>Burkholderiales</taxon>
        <taxon>Alcaligenaceae</taxon>
        <taxon>Bordetella</taxon>
    </lineage>
</organism>
<proteinExistence type="inferred from homology"/>
<reference key="1">
    <citation type="journal article" date="2003" name="Nat. Genet.">
        <title>Comparative analysis of the genome sequences of Bordetella pertussis, Bordetella parapertussis and Bordetella bronchiseptica.</title>
        <authorList>
            <person name="Parkhill J."/>
            <person name="Sebaihia M."/>
            <person name="Preston A."/>
            <person name="Murphy L.D."/>
            <person name="Thomson N.R."/>
            <person name="Harris D.E."/>
            <person name="Holden M.T.G."/>
            <person name="Churcher C.M."/>
            <person name="Bentley S.D."/>
            <person name="Mungall K.L."/>
            <person name="Cerdeno-Tarraga A.-M."/>
            <person name="Temple L."/>
            <person name="James K.D."/>
            <person name="Harris B."/>
            <person name="Quail M.A."/>
            <person name="Achtman M."/>
            <person name="Atkin R."/>
            <person name="Baker S."/>
            <person name="Basham D."/>
            <person name="Bason N."/>
            <person name="Cherevach I."/>
            <person name="Chillingworth T."/>
            <person name="Collins M."/>
            <person name="Cronin A."/>
            <person name="Davis P."/>
            <person name="Doggett J."/>
            <person name="Feltwell T."/>
            <person name="Goble A."/>
            <person name="Hamlin N."/>
            <person name="Hauser H."/>
            <person name="Holroyd S."/>
            <person name="Jagels K."/>
            <person name="Leather S."/>
            <person name="Moule S."/>
            <person name="Norberczak H."/>
            <person name="O'Neil S."/>
            <person name="Ormond D."/>
            <person name="Price C."/>
            <person name="Rabbinowitsch E."/>
            <person name="Rutter S."/>
            <person name="Sanders M."/>
            <person name="Saunders D."/>
            <person name="Seeger K."/>
            <person name="Sharp S."/>
            <person name="Simmonds M."/>
            <person name="Skelton J."/>
            <person name="Squares R."/>
            <person name="Squares S."/>
            <person name="Stevens K."/>
            <person name="Unwin L."/>
            <person name="Whitehead S."/>
            <person name="Barrell B.G."/>
            <person name="Maskell D.J."/>
        </authorList>
    </citation>
    <scope>NUCLEOTIDE SEQUENCE [LARGE SCALE GENOMIC DNA]</scope>
    <source>
        <strain>12822 / ATCC BAA-587 / NCTC 13253</strain>
    </source>
</reference>
<protein>
    <recommendedName>
        <fullName evidence="1">Sec-independent protein translocase protein TatB</fullName>
    </recommendedName>
</protein>
<name>TATB_BORPA</name>
<gene>
    <name evidence="1" type="primary">tatB</name>
    <name type="ordered locus">BPP4277</name>
</gene>
<dbReference type="EMBL" id="BX640436">
    <property type="protein sequence ID" value="CAE39556.1"/>
    <property type="molecule type" value="Genomic_DNA"/>
</dbReference>
<dbReference type="RefSeq" id="WP_010929473.1">
    <property type="nucleotide sequence ID" value="NC_002928.3"/>
</dbReference>
<dbReference type="SMR" id="Q7W2X4"/>
<dbReference type="GeneID" id="93206074"/>
<dbReference type="KEGG" id="bpa:BPP4277"/>
<dbReference type="HOGENOM" id="CLU_086034_1_1_4"/>
<dbReference type="Proteomes" id="UP000001421">
    <property type="component" value="Chromosome"/>
</dbReference>
<dbReference type="GO" id="GO:0033281">
    <property type="term" value="C:TAT protein transport complex"/>
    <property type="evidence" value="ECO:0007669"/>
    <property type="project" value="UniProtKB-UniRule"/>
</dbReference>
<dbReference type="GO" id="GO:0008320">
    <property type="term" value="F:protein transmembrane transporter activity"/>
    <property type="evidence" value="ECO:0007669"/>
    <property type="project" value="UniProtKB-UniRule"/>
</dbReference>
<dbReference type="GO" id="GO:0043953">
    <property type="term" value="P:protein transport by the Tat complex"/>
    <property type="evidence" value="ECO:0007669"/>
    <property type="project" value="UniProtKB-UniRule"/>
</dbReference>
<dbReference type="Gene3D" id="1.20.5.3310">
    <property type="match status" value="1"/>
</dbReference>
<dbReference type="HAMAP" id="MF_00237">
    <property type="entry name" value="TatB"/>
    <property type="match status" value="1"/>
</dbReference>
<dbReference type="InterPro" id="IPR003369">
    <property type="entry name" value="TatA/B/E"/>
</dbReference>
<dbReference type="InterPro" id="IPR018448">
    <property type="entry name" value="TatB"/>
</dbReference>
<dbReference type="NCBIfam" id="TIGR01410">
    <property type="entry name" value="tatB"/>
    <property type="match status" value="1"/>
</dbReference>
<dbReference type="PANTHER" id="PTHR33162">
    <property type="entry name" value="SEC-INDEPENDENT PROTEIN TRANSLOCASE PROTEIN TATA, CHLOROPLASTIC"/>
    <property type="match status" value="1"/>
</dbReference>
<dbReference type="PANTHER" id="PTHR33162:SF1">
    <property type="entry name" value="SEC-INDEPENDENT PROTEIN TRANSLOCASE PROTEIN TATA, CHLOROPLASTIC"/>
    <property type="match status" value="1"/>
</dbReference>
<dbReference type="Pfam" id="PF02416">
    <property type="entry name" value="TatA_B_E"/>
    <property type="match status" value="1"/>
</dbReference>
<dbReference type="PRINTS" id="PR01506">
    <property type="entry name" value="TATBPROTEIN"/>
</dbReference>
<feature type="chain" id="PRO_0000301144" description="Sec-independent protein translocase protein TatB">
    <location>
        <begin position="1"/>
        <end position="151"/>
    </location>
</feature>
<feature type="transmembrane region" description="Helical" evidence="1">
    <location>
        <begin position="1"/>
        <end position="21"/>
    </location>
</feature>
<feature type="region of interest" description="Disordered" evidence="2">
    <location>
        <begin position="66"/>
        <end position="151"/>
    </location>
</feature>
<feature type="compositionally biased region" description="Basic and acidic residues" evidence="2">
    <location>
        <begin position="93"/>
        <end position="103"/>
    </location>
</feature>
<feature type="compositionally biased region" description="Low complexity" evidence="2">
    <location>
        <begin position="109"/>
        <end position="122"/>
    </location>
</feature>
<feature type="compositionally biased region" description="Low complexity" evidence="2">
    <location>
        <begin position="133"/>
        <end position="151"/>
    </location>
</feature>
<accession>Q7W2X4</accession>
<keyword id="KW-0997">Cell inner membrane</keyword>
<keyword id="KW-1003">Cell membrane</keyword>
<keyword id="KW-0472">Membrane</keyword>
<keyword id="KW-0653">Protein transport</keyword>
<keyword id="KW-0811">Translocation</keyword>
<keyword id="KW-0812">Transmembrane</keyword>
<keyword id="KW-1133">Transmembrane helix</keyword>
<keyword id="KW-0813">Transport</keyword>